<evidence type="ECO:0000250" key="1"/>
<evidence type="ECO:0000255" key="2">
    <source>
        <dbReference type="HAMAP-Rule" id="MF_00403"/>
    </source>
</evidence>
<evidence type="ECO:0000256" key="3">
    <source>
        <dbReference type="SAM" id="MobiDB-lite"/>
    </source>
</evidence>
<evidence type="ECO:0000305" key="4"/>
<feature type="chain" id="PRO_0000295994" description="Small ribosomal subunit protein uS12">
    <location>
        <begin position="1"/>
        <end position="137"/>
    </location>
</feature>
<feature type="region of interest" description="Disordered" evidence="3">
    <location>
        <begin position="1"/>
        <end position="22"/>
    </location>
</feature>
<feature type="region of interest" description="Disordered" evidence="3">
    <location>
        <begin position="35"/>
        <end position="57"/>
    </location>
</feature>
<feature type="compositionally biased region" description="Basic residues" evidence="3">
    <location>
        <begin position="9"/>
        <end position="18"/>
    </location>
</feature>
<feature type="modified residue" description="3-methylthioaspartic acid" evidence="1">
    <location>
        <position position="102"/>
    </location>
</feature>
<comment type="function">
    <text evidence="2">With S4 and S5 plays an important role in translational accuracy.</text>
</comment>
<comment type="function">
    <text evidence="2">Interacts with and stabilizes bases of the 16S rRNA that are involved in tRNA selection in the A site and with the mRNA backbone. Located at the interface of the 30S and 50S subunits, it traverses the body of the 30S subunit contacting proteins on the other side and probably holding the rRNA structure together. The combined cluster of proteins S8, S12 and S17 appears to hold together the shoulder and platform of the 30S subunit.</text>
</comment>
<comment type="subunit">
    <text evidence="2">Part of the 30S ribosomal subunit. Contacts proteins S8 and S17. May interact with IF1 in the 30S initiation complex.</text>
</comment>
<comment type="similarity">
    <text evidence="2">Belongs to the universal ribosomal protein uS12 family.</text>
</comment>
<accession>Q03ZQ4</accession>
<sequence length="137" mass="15100">MPTINQLVRKPRKSKVSKSKSPALNFGYNSMKKKATNNAAPQKRGVATRVGTMTPKKPNSALRKYARVRLSNLYEVTAYIPGIGHNLQEHSVVLIRGGRVKDLPGVRYHIIRGALDTAGVDGRMTSRSKYGTKAPKK</sequence>
<protein>
    <recommendedName>
        <fullName evidence="2">Small ribosomal subunit protein uS12</fullName>
    </recommendedName>
    <alternativeName>
        <fullName evidence="4">30S ribosomal protein S12</fullName>
    </alternativeName>
</protein>
<dbReference type="EMBL" id="CP000414">
    <property type="protein sequence ID" value="ABJ61318.1"/>
    <property type="molecule type" value="Genomic_DNA"/>
</dbReference>
<dbReference type="RefSeq" id="WP_004911305.1">
    <property type="nucleotide sequence ID" value="NC_008531.1"/>
</dbReference>
<dbReference type="SMR" id="Q03ZQ4"/>
<dbReference type="EnsemblBacteria" id="ABJ61318">
    <property type="protein sequence ID" value="ABJ61318"/>
    <property type="gene ID" value="LEUM_0187"/>
</dbReference>
<dbReference type="GeneID" id="97504990"/>
<dbReference type="KEGG" id="lme:LEUM_0187"/>
<dbReference type="eggNOG" id="COG0048">
    <property type="taxonomic scope" value="Bacteria"/>
</dbReference>
<dbReference type="HOGENOM" id="CLU_104295_1_1_9"/>
<dbReference type="Proteomes" id="UP000000362">
    <property type="component" value="Chromosome"/>
</dbReference>
<dbReference type="GO" id="GO:0015935">
    <property type="term" value="C:small ribosomal subunit"/>
    <property type="evidence" value="ECO:0007669"/>
    <property type="project" value="InterPro"/>
</dbReference>
<dbReference type="GO" id="GO:0019843">
    <property type="term" value="F:rRNA binding"/>
    <property type="evidence" value="ECO:0007669"/>
    <property type="project" value="UniProtKB-UniRule"/>
</dbReference>
<dbReference type="GO" id="GO:0003735">
    <property type="term" value="F:structural constituent of ribosome"/>
    <property type="evidence" value="ECO:0007669"/>
    <property type="project" value="InterPro"/>
</dbReference>
<dbReference type="GO" id="GO:0000049">
    <property type="term" value="F:tRNA binding"/>
    <property type="evidence" value="ECO:0007669"/>
    <property type="project" value="UniProtKB-UniRule"/>
</dbReference>
<dbReference type="GO" id="GO:0006412">
    <property type="term" value="P:translation"/>
    <property type="evidence" value="ECO:0007669"/>
    <property type="project" value="UniProtKB-UniRule"/>
</dbReference>
<dbReference type="CDD" id="cd03368">
    <property type="entry name" value="Ribosomal_S12"/>
    <property type="match status" value="1"/>
</dbReference>
<dbReference type="FunFam" id="2.40.50.140:FF:000001">
    <property type="entry name" value="30S ribosomal protein S12"/>
    <property type="match status" value="1"/>
</dbReference>
<dbReference type="Gene3D" id="2.40.50.140">
    <property type="entry name" value="Nucleic acid-binding proteins"/>
    <property type="match status" value="1"/>
</dbReference>
<dbReference type="HAMAP" id="MF_00403_B">
    <property type="entry name" value="Ribosomal_uS12_B"/>
    <property type="match status" value="1"/>
</dbReference>
<dbReference type="InterPro" id="IPR012340">
    <property type="entry name" value="NA-bd_OB-fold"/>
</dbReference>
<dbReference type="InterPro" id="IPR006032">
    <property type="entry name" value="Ribosomal_uS12"/>
</dbReference>
<dbReference type="InterPro" id="IPR005679">
    <property type="entry name" value="Ribosomal_uS12_bac"/>
</dbReference>
<dbReference type="NCBIfam" id="TIGR00981">
    <property type="entry name" value="rpsL_bact"/>
    <property type="match status" value="1"/>
</dbReference>
<dbReference type="PANTHER" id="PTHR11652">
    <property type="entry name" value="30S RIBOSOMAL PROTEIN S12 FAMILY MEMBER"/>
    <property type="match status" value="1"/>
</dbReference>
<dbReference type="Pfam" id="PF00164">
    <property type="entry name" value="Ribosom_S12_S23"/>
    <property type="match status" value="1"/>
</dbReference>
<dbReference type="PIRSF" id="PIRSF002133">
    <property type="entry name" value="Ribosomal_S12/S23"/>
    <property type="match status" value="1"/>
</dbReference>
<dbReference type="PRINTS" id="PR01034">
    <property type="entry name" value="RIBOSOMALS12"/>
</dbReference>
<dbReference type="SUPFAM" id="SSF50249">
    <property type="entry name" value="Nucleic acid-binding proteins"/>
    <property type="match status" value="1"/>
</dbReference>
<dbReference type="PROSITE" id="PS00055">
    <property type="entry name" value="RIBOSOMAL_S12"/>
    <property type="match status" value="1"/>
</dbReference>
<gene>
    <name evidence="2" type="primary">rpsL</name>
    <name type="ordered locus">LEUM_0187</name>
</gene>
<proteinExistence type="inferred from homology"/>
<keyword id="KW-0488">Methylation</keyword>
<keyword id="KW-1185">Reference proteome</keyword>
<keyword id="KW-0687">Ribonucleoprotein</keyword>
<keyword id="KW-0689">Ribosomal protein</keyword>
<keyword id="KW-0694">RNA-binding</keyword>
<keyword id="KW-0699">rRNA-binding</keyword>
<keyword id="KW-0820">tRNA-binding</keyword>
<name>RS12_LEUMM</name>
<reference key="1">
    <citation type="journal article" date="2006" name="Proc. Natl. Acad. Sci. U.S.A.">
        <title>Comparative genomics of the lactic acid bacteria.</title>
        <authorList>
            <person name="Makarova K.S."/>
            <person name="Slesarev A."/>
            <person name="Wolf Y.I."/>
            <person name="Sorokin A."/>
            <person name="Mirkin B."/>
            <person name="Koonin E.V."/>
            <person name="Pavlov A."/>
            <person name="Pavlova N."/>
            <person name="Karamychev V."/>
            <person name="Polouchine N."/>
            <person name="Shakhova V."/>
            <person name="Grigoriev I."/>
            <person name="Lou Y."/>
            <person name="Rohksar D."/>
            <person name="Lucas S."/>
            <person name="Huang K."/>
            <person name="Goodstein D.M."/>
            <person name="Hawkins T."/>
            <person name="Plengvidhya V."/>
            <person name="Welker D."/>
            <person name="Hughes J."/>
            <person name="Goh Y."/>
            <person name="Benson A."/>
            <person name="Baldwin K."/>
            <person name="Lee J.-H."/>
            <person name="Diaz-Muniz I."/>
            <person name="Dosti B."/>
            <person name="Smeianov V."/>
            <person name="Wechter W."/>
            <person name="Barabote R."/>
            <person name="Lorca G."/>
            <person name="Altermann E."/>
            <person name="Barrangou R."/>
            <person name="Ganesan B."/>
            <person name="Xie Y."/>
            <person name="Rawsthorne H."/>
            <person name="Tamir D."/>
            <person name="Parker C."/>
            <person name="Breidt F."/>
            <person name="Broadbent J.R."/>
            <person name="Hutkins R."/>
            <person name="O'Sullivan D."/>
            <person name="Steele J."/>
            <person name="Unlu G."/>
            <person name="Saier M.H. Jr."/>
            <person name="Klaenhammer T."/>
            <person name="Richardson P."/>
            <person name="Kozyavkin S."/>
            <person name="Weimer B.C."/>
            <person name="Mills D.A."/>
        </authorList>
    </citation>
    <scope>NUCLEOTIDE SEQUENCE [LARGE SCALE GENOMIC DNA]</scope>
    <source>
        <strain>ATCC 8293 / DSM 20343 / BCRC 11652 / CCM 1803 / JCM 6124 / NCDO 523 / NBRC 100496 / NCIMB 8023 / NCTC 12954 / NRRL B-1118 / 37Y</strain>
    </source>
</reference>
<organism>
    <name type="scientific">Leuconostoc mesenteroides subsp. mesenteroides (strain ATCC 8293 / DSM 20343 / BCRC 11652 / CCM 1803 / JCM 6124 / NCDO 523 / NBRC 100496 / NCIMB 8023 / NCTC 12954 / NRRL B-1118 / 37Y)</name>
    <dbReference type="NCBI Taxonomy" id="203120"/>
    <lineage>
        <taxon>Bacteria</taxon>
        <taxon>Bacillati</taxon>
        <taxon>Bacillota</taxon>
        <taxon>Bacilli</taxon>
        <taxon>Lactobacillales</taxon>
        <taxon>Lactobacillaceae</taxon>
        <taxon>Leuconostoc</taxon>
    </lineage>
</organism>